<organism>
    <name type="scientific">Thermoplasma acidophilum (strain ATCC 25905 / DSM 1728 / JCM 9062 / NBRC 15155 / AMRC-C165)</name>
    <dbReference type="NCBI Taxonomy" id="273075"/>
    <lineage>
        <taxon>Archaea</taxon>
        <taxon>Methanobacteriati</taxon>
        <taxon>Thermoplasmatota</taxon>
        <taxon>Thermoplasmata</taxon>
        <taxon>Thermoplasmatales</taxon>
        <taxon>Thermoplasmataceae</taxon>
        <taxon>Thermoplasma</taxon>
    </lineage>
</organism>
<accession>Q9HJ15</accession>
<feature type="chain" id="PRO_0000156877" description="UPF0179 protein Ta1159">
    <location>
        <begin position="1"/>
        <end position="148"/>
    </location>
</feature>
<protein>
    <recommendedName>
        <fullName>UPF0179 protein Ta1159</fullName>
    </recommendedName>
</protein>
<sequence>MITLPKISLIGSNIAKEGLEFVFAGPLAACSDCRVKNVCFNLEQGHRYRVTKVREQVNPCIIFNGDKVNTVEVEELEDYVNVQESKRIQEGAIITLKSMNCDYITCPNIEKCNLYYFKPDSKVMVKSIGKEIKCPKGYKMKQVAITYK</sequence>
<name>Y1159_THEAC</name>
<reference key="1">
    <citation type="journal article" date="2000" name="Nature">
        <title>The genome sequence of the thermoacidophilic scavenger Thermoplasma acidophilum.</title>
        <authorList>
            <person name="Ruepp A."/>
            <person name="Graml W."/>
            <person name="Santos-Martinez M.-L."/>
            <person name="Koretke K.K."/>
            <person name="Volker C."/>
            <person name="Mewes H.-W."/>
            <person name="Frishman D."/>
            <person name="Stocker S."/>
            <person name="Lupas A.N."/>
            <person name="Baumeister W."/>
        </authorList>
    </citation>
    <scope>NUCLEOTIDE SEQUENCE [LARGE SCALE GENOMIC DNA]</scope>
    <source>
        <strain>ATCC 25905 / DSM 1728 / JCM 9062 / NBRC 15155 / AMRC-C165</strain>
    </source>
</reference>
<proteinExistence type="inferred from homology"/>
<dbReference type="EMBL" id="AL445066">
    <property type="protein sequence ID" value="CAC12284.1"/>
    <property type="molecule type" value="Genomic_DNA"/>
</dbReference>
<dbReference type="RefSeq" id="WP_010901566.1">
    <property type="nucleotide sequence ID" value="NC_002578.1"/>
</dbReference>
<dbReference type="STRING" id="273075.gene:9572380"/>
<dbReference type="PaxDb" id="273075-Ta1159"/>
<dbReference type="EnsemblBacteria" id="CAC12284">
    <property type="protein sequence ID" value="CAC12284"/>
    <property type="gene ID" value="CAC12284"/>
</dbReference>
<dbReference type="KEGG" id="tac:Ta1159"/>
<dbReference type="eggNOG" id="arCOG04477">
    <property type="taxonomic scope" value="Archaea"/>
</dbReference>
<dbReference type="HOGENOM" id="CLU_121764_0_0_2"/>
<dbReference type="InParanoid" id="Q9HJ15"/>
<dbReference type="OrthoDB" id="24613at2157"/>
<dbReference type="Proteomes" id="UP000001024">
    <property type="component" value="Chromosome"/>
</dbReference>
<dbReference type="HAMAP" id="MF_00498">
    <property type="entry name" value="UPF0179"/>
    <property type="match status" value="1"/>
</dbReference>
<dbReference type="InterPro" id="IPR005369">
    <property type="entry name" value="UPF0179"/>
</dbReference>
<dbReference type="NCBIfam" id="NF002253">
    <property type="entry name" value="PRK01177.1"/>
    <property type="match status" value="1"/>
</dbReference>
<dbReference type="PANTHER" id="PTHR40699">
    <property type="entry name" value="UPF0179 PROTEIN MJ1627"/>
    <property type="match status" value="1"/>
</dbReference>
<dbReference type="PANTHER" id="PTHR40699:SF1">
    <property type="entry name" value="UPF0179 PROTEIN MJ1627"/>
    <property type="match status" value="1"/>
</dbReference>
<dbReference type="Pfam" id="PF03684">
    <property type="entry name" value="UPF0179"/>
    <property type="match status" value="1"/>
</dbReference>
<dbReference type="PIRSF" id="PIRSF006595">
    <property type="entry name" value="UCP006595"/>
    <property type="match status" value="1"/>
</dbReference>
<gene>
    <name type="ordered locus">Ta1159</name>
</gene>
<evidence type="ECO:0000305" key="1"/>
<comment type="similarity">
    <text evidence="1">Belongs to the UPF0179 family.</text>
</comment>
<keyword id="KW-1185">Reference proteome</keyword>